<dbReference type="EMBL" id="AC010927">
    <property type="protein sequence ID" value="AAF04416.1"/>
    <property type="molecule type" value="Genomic_DNA"/>
</dbReference>
<dbReference type="EMBL" id="CP002686">
    <property type="protein sequence ID" value="AEE74857.1"/>
    <property type="molecule type" value="Genomic_DNA"/>
</dbReference>
<dbReference type="EMBL" id="AY085880">
    <property type="protein sequence ID" value="AAM63093.1"/>
    <property type="molecule type" value="mRNA"/>
</dbReference>
<dbReference type="RefSeq" id="NP_187619.1">
    <property type="nucleotide sequence ID" value="NM_111843.5"/>
</dbReference>
<dbReference type="SMR" id="Q9SR72"/>
<dbReference type="FunCoup" id="Q9SR72">
    <property type="interactions" value="59"/>
</dbReference>
<dbReference type="GlyGen" id="Q9SR72">
    <property type="glycosylation" value="2 sites"/>
</dbReference>
<dbReference type="PaxDb" id="3702-AT3G10080.1"/>
<dbReference type="ProteomicsDB" id="247393"/>
<dbReference type="EnsemblPlants" id="AT3G10080.1">
    <property type="protein sequence ID" value="AT3G10080.1"/>
    <property type="gene ID" value="AT3G10080"/>
</dbReference>
<dbReference type="GeneID" id="820169"/>
<dbReference type="Gramene" id="AT3G10080.1">
    <property type="protein sequence ID" value="AT3G10080.1"/>
    <property type="gene ID" value="AT3G10080"/>
</dbReference>
<dbReference type="KEGG" id="ath:AT3G10080"/>
<dbReference type="Araport" id="AT3G10080"/>
<dbReference type="TAIR" id="AT3G10080"/>
<dbReference type="eggNOG" id="ENOG502RDTK">
    <property type="taxonomic scope" value="Eukaryota"/>
</dbReference>
<dbReference type="HOGENOM" id="CLU_015790_0_3_1"/>
<dbReference type="InParanoid" id="Q9SR72"/>
<dbReference type="OrthoDB" id="1921208at2759"/>
<dbReference type="PhylomeDB" id="Q9SR72"/>
<dbReference type="PRO" id="PR:Q9SR72"/>
<dbReference type="Proteomes" id="UP000006548">
    <property type="component" value="Chromosome 3"/>
</dbReference>
<dbReference type="ExpressionAtlas" id="Q9SR72">
    <property type="expression patterns" value="baseline and differential"/>
</dbReference>
<dbReference type="GO" id="GO:0048046">
    <property type="term" value="C:apoplast"/>
    <property type="evidence" value="ECO:0007669"/>
    <property type="project" value="UniProtKB-SubCell"/>
</dbReference>
<dbReference type="GO" id="GO:0030145">
    <property type="term" value="F:manganese ion binding"/>
    <property type="evidence" value="ECO:0007669"/>
    <property type="project" value="InterPro"/>
</dbReference>
<dbReference type="CDD" id="cd02241">
    <property type="entry name" value="cupin_OxOx"/>
    <property type="match status" value="1"/>
</dbReference>
<dbReference type="FunFam" id="2.60.120.10:FF:000025">
    <property type="entry name" value="germin-like protein subfamily 2 member 1"/>
    <property type="match status" value="1"/>
</dbReference>
<dbReference type="Gene3D" id="2.60.120.10">
    <property type="entry name" value="Jelly Rolls"/>
    <property type="match status" value="1"/>
</dbReference>
<dbReference type="InterPro" id="IPR006045">
    <property type="entry name" value="Cupin_1"/>
</dbReference>
<dbReference type="InterPro" id="IPR001929">
    <property type="entry name" value="Germin"/>
</dbReference>
<dbReference type="InterPro" id="IPR014710">
    <property type="entry name" value="RmlC-like_jellyroll"/>
</dbReference>
<dbReference type="InterPro" id="IPR011051">
    <property type="entry name" value="RmlC_Cupin_sf"/>
</dbReference>
<dbReference type="PANTHER" id="PTHR31238">
    <property type="entry name" value="GERMIN-LIKE PROTEIN SUBFAMILY 3 MEMBER 3"/>
    <property type="match status" value="1"/>
</dbReference>
<dbReference type="Pfam" id="PF00190">
    <property type="entry name" value="Cupin_1"/>
    <property type="match status" value="1"/>
</dbReference>
<dbReference type="PRINTS" id="PR00325">
    <property type="entry name" value="GERMIN"/>
</dbReference>
<dbReference type="SMART" id="SM00835">
    <property type="entry name" value="Cupin_1"/>
    <property type="match status" value="1"/>
</dbReference>
<dbReference type="SUPFAM" id="SSF51182">
    <property type="entry name" value="RmlC-like cupins"/>
    <property type="match status" value="1"/>
</dbReference>
<accession>Q9SR72</accession>
<gene>
    <name type="ordered locus">At3g10080</name>
    <name type="ORF">T22K18.9</name>
</gene>
<comment type="function">
    <text>May play a role in plant defense. Probably has no oxalate oxidase activity even if the active site is conserved.</text>
</comment>
<comment type="subunit">
    <text evidence="1">Oligomer (believed to be a pentamer but probably hexamer).</text>
</comment>
<comment type="subcellular location">
    <subcellularLocation>
        <location evidence="1">Secreted</location>
        <location evidence="1">Extracellular space</location>
        <location evidence="1">Apoplast</location>
    </subcellularLocation>
</comment>
<comment type="similarity">
    <text evidence="3">Belongs to the germin family.</text>
</comment>
<feature type="signal peptide" evidence="2">
    <location>
        <begin position="1"/>
        <end position="24"/>
    </location>
</feature>
<feature type="chain" id="PRO_0000010827" description="Germin-like protein subfamily 3 member 2">
    <location>
        <begin position="25"/>
        <end position="227"/>
    </location>
</feature>
<feature type="domain" description="Cupin type-1" evidence="2">
    <location>
        <begin position="68"/>
        <end position="213"/>
    </location>
</feature>
<feature type="binding site" evidence="1">
    <location>
        <position position="115"/>
    </location>
    <ligand>
        <name>Mn(2+)</name>
        <dbReference type="ChEBI" id="CHEBI:29035"/>
    </ligand>
</feature>
<feature type="binding site" evidence="1">
    <location>
        <position position="117"/>
    </location>
    <ligand>
        <name>Mn(2+)</name>
        <dbReference type="ChEBI" id="CHEBI:29035"/>
    </ligand>
</feature>
<feature type="binding site" evidence="1">
    <location>
        <position position="122"/>
    </location>
    <ligand>
        <name>Mn(2+)</name>
        <dbReference type="ChEBI" id="CHEBI:29035"/>
    </ligand>
</feature>
<feature type="binding site" evidence="1">
    <location>
        <position position="161"/>
    </location>
    <ligand>
        <name>Mn(2+)</name>
        <dbReference type="ChEBI" id="CHEBI:29035"/>
    </ligand>
</feature>
<feature type="glycosylation site" description="N-linked (GlcNAc...) asparagine" evidence="2">
    <location>
        <position position="56"/>
    </location>
</feature>
<feature type="glycosylation site" description="N-linked (GlcNAc...) asparagine" evidence="2">
    <location>
        <position position="75"/>
    </location>
</feature>
<feature type="disulfide bond" evidence="1">
    <location>
        <begin position="34"/>
        <end position="54"/>
    </location>
</feature>
<protein>
    <recommendedName>
        <fullName>Germin-like protein subfamily 3 member 2</fullName>
    </recommendedName>
</protein>
<evidence type="ECO:0000250" key="1"/>
<evidence type="ECO:0000255" key="2"/>
<evidence type="ECO:0000305" key="3"/>
<proteinExistence type="evidence at transcript level"/>
<organism>
    <name type="scientific">Arabidopsis thaliana</name>
    <name type="common">Mouse-ear cress</name>
    <dbReference type="NCBI Taxonomy" id="3702"/>
    <lineage>
        <taxon>Eukaryota</taxon>
        <taxon>Viridiplantae</taxon>
        <taxon>Streptophyta</taxon>
        <taxon>Embryophyta</taxon>
        <taxon>Tracheophyta</taxon>
        <taxon>Spermatophyta</taxon>
        <taxon>Magnoliopsida</taxon>
        <taxon>eudicotyledons</taxon>
        <taxon>Gunneridae</taxon>
        <taxon>Pentapetalae</taxon>
        <taxon>rosids</taxon>
        <taxon>malvids</taxon>
        <taxon>Brassicales</taxon>
        <taxon>Brassicaceae</taxon>
        <taxon>Camelineae</taxon>
        <taxon>Arabidopsis</taxon>
    </lineage>
</organism>
<sequence length="227" mass="24779">MEANTLFLLKALCLLCFNVCFTLASDPDPIQDFCIPKPVTSPYHDHHFSTNLPCKNSSEVTTEDFVFSGLKTAGNFTETGFATVPVGPENFPGLNTLGISFVRADLKPGSINPPHYHPRATEVAHLVKGRVYSGFVDSNNKVYAKVMEEGEMMVYPKGLVHFQMNVGDVTATIVGGLNSQNPGIQKIPSVVFGSGINEELLMKAFGLSLKQIGTLKKRFDPVMSNEH</sequence>
<name>GL32_ARATH</name>
<keyword id="KW-0052">Apoplast</keyword>
<keyword id="KW-1015">Disulfide bond</keyword>
<keyword id="KW-0325">Glycoprotein</keyword>
<keyword id="KW-0464">Manganese</keyword>
<keyword id="KW-0479">Metal-binding</keyword>
<keyword id="KW-1185">Reference proteome</keyword>
<keyword id="KW-0964">Secreted</keyword>
<keyword id="KW-0732">Signal</keyword>
<reference key="1">
    <citation type="journal article" date="2000" name="Nature">
        <title>Sequence and analysis of chromosome 3 of the plant Arabidopsis thaliana.</title>
        <authorList>
            <person name="Salanoubat M."/>
            <person name="Lemcke K."/>
            <person name="Rieger M."/>
            <person name="Ansorge W."/>
            <person name="Unseld M."/>
            <person name="Fartmann B."/>
            <person name="Valle G."/>
            <person name="Bloecker H."/>
            <person name="Perez-Alonso M."/>
            <person name="Obermaier B."/>
            <person name="Delseny M."/>
            <person name="Boutry M."/>
            <person name="Grivell L.A."/>
            <person name="Mache R."/>
            <person name="Puigdomenech P."/>
            <person name="De Simone V."/>
            <person name="Choisne N."/>
            <person name="Artiguenave F."/>
            <person name="Robert C."/>
            <person name="Brottier P."/>
            <person name="Wincker P."/>
            <person name="Cattolico L."/>
            <person name="Weissenbach J."/>
            <person name="Saurin W."/>
            <person name="Quetier F."/>
            <person name="Schaefer M."/>
            <person name="Mueller-Auer S."/>
            <person name="Gabel C."/>
            <person name="Fuchs M."/>
            <person name="Benes V."/>
            <person name="Wurmbach E."/>
            <person name="Drzonek H."/>
            <person name="Erfle H."/>
            <person name="Jordan N."/>
            <person name="Bangert S."/>
            <person name="Wiedelmann R."/>
            <person name="Kranz H."/>
            <person name="Voss H."/>
            <person name="Holland R."/>
            <person name="Brandt P."/>
            <person name="Nyakatura G."/>
            <person name="Vezzi A."/>
            <person name="D'Angelo M."/>
            <person name="Pallavicini A."/>
            <person name="Toppo S."/>
            <person name="Simionati B."/>
            <person name="Conrad A."/>
            <person name="Hornischer K."/>
            <person name="Kauer G."/>
            <person name="Loehnert T.-H."/>
            <person name="Nordsiek G."/>
            <person name="Reichelt J."/>
            <person name="Scharfe M."/>
            <person name="Schoen O."/>
            <person name="Bargues M."/>
            <person name="Terol J."/>
            <person name="Climent J."/>
            <person name="Navarro P."/>
            <person name="Collado C."/>
            <person name="Perez-Perez A."/>
            <person name="Ottenwaelder B."/>
            <person name="Duchemin D."/>
            <person name="Cooke R."/>
            <person name="Laudie M."/>
            <person name="Berger-Llauro C."/>
            <person name="Purnelle B."/>
            <person name="Masuy D."/>
            <person name="de Haan M."/>
            <person name="Maarse A.C."/>
            <person name="Alcaraz J.-P."/>
            <person name="Cottet A."/>
            <person name="Casacuberta E."/>
            <person name="Monfort A."/>
            <person name="Argiriou A."/>
            <person name="Flores M."/>
            <person name="Liguori R."/>
            <person name="Vitale D."/>
            <person name="Mannhaupt G."/>
            <person name="Haase D."/>
            <person name="Schoof H."/>
            <person name="Rudd S."/>
            <person name="Zaccaria P."/>
            <person name="Mewes H.-W."/>
            <person name="Mayer K.F.X."/>
            <person name="Kaul S."/>
            <person name="Town C.D."/>
            <person name="Koo H.L."/>
            <person name="Tallon L.J."/>
            <person name="Jenkins J."/>
            <person name="Rooney T."/>
            <person name="Rizzo M."/>
            <person name="Walts A."/>
            <person name="Utterback T."/>
            <person name="Fujii C.Y."/>
            <person name="Shea T.P."/>
            <person name="Creasy T.H."/>
            <person name="Haas B."/>
            <person name="Maiti R."/>
            <person name="Wu D."/>
            <person name="Peterson J."/>
            <person name="Van Aken S."/>
            <person name="Pai G."/>
            <person name="Militscher J."/>
            <person name="Sellers P."/>
            <person name="Gill J.E."/>
            <person name="Feldblyum T.V."/>
            <person name="Preuss D."/>
            <person name="Lin X."/>
            <person name="Nierman W.C."/>
            <person name="Salzberg S.L."/>
            <person name="White O."/>
            <person name="Venter J.C."/>
            <person name="Fraser C.M."/>
            <person name="Kaneko T."/>
            <person name="Nakamura Y."/>
            <person name="Sato S."/>
            <person name="Kato T."/>
            <person name="Asamizu E."/>
            <person name="Sasamoto S."/>
            <person name="Kimura T."/>
            <person name="Idesawa K."/>
            <person name="Kawashima K."/>
            <person name="Kishida Y."/>
            <person name="Kiyokawa C."/>
            <person name="Kohara M."/>
            <person name="Matsumoto M."/>
            <person name="Matsuno A."/>
            <person name="Muraki A."/>
            <person name="Nakayama S."/>
            <person name="Nakazaki N."/>
            <person name="Shinpo S."/>
            <person name="Takeuchi C."/>
            <person name="Wada T."/>
            <person name="Watanabe A."/>
            <person name="Yamada M."/>
            <person name="Yasuda M."/>
            <person name="Tabata S."/>
        </authorList>
    </citation>
    <scope>NUCLEOTIDE SEQUENCE [LARGE SCALE GENOMIC DNA]</scope>
    <source>
        <strain>cv. Columbia</strain>
    </source>
</reference>
<reference key="2">
    <citation type="journal article" date="2017" name="Plant J.">
        <title>Araport11: a complete reannotation of the Arabidopsis thaliana reference genome.</title>
        <authorList>
            <person name="Cheng C.Y."/>
            <person name="Krishnakumar V."/>
            <person name="Chan A.P."/>
            <person name="Thibaud-Nissen F."/>
            <person name="Schobel S."/>
            <person name="Town C.D."/>
        </authorList>
    </citation>
    <scope>GENOME REANNOTATION</scope>
    <source>
        <strain>cv. Columbia</strain>
    </source>
</reference>
<reference key="3">
    <citation type="submission" date="2002-03" db="EMBL/GenBank/DDBJ databases">
        <title>Full-length cDNA from Arabidopsis thaliana.</title>
        <authorList>
            <person name="Brover V.V."/>
            <person name="Troukhan M.E."/>
            <person name="Alexandrov N.A."/>
            <person name="Lu Y.-P."/>
            <person name="Flavell R.B."/>
            <person name="Feldmann K.A."/>
        </authorList>
    </citation>
    <scope>NUCLEOTIDE SEQUENCE [LARGE SCALE MRNA]</scope>
</reference>